<organism>
    <name type="scientific">Bacillus anthracis</name>
    <dbReference type="NCBI Taxonomy" id="1392"/>
    <lineage>
        <taxon>Bacteria</taxon>
        <taxon>Bacillati</taxon>
        <taxon>Bacillota</taxon>
        <taxon>Bacilli</taxon>
        <taxon>Bacillales</taxon>
        <taxon>Bacillaceae</taxon>
        <taxon>Bacillus</taxon>
        <taxon>Bacillus cereus group</taxon>
    </lineage>
</organism>
<comment type="function">
    <text evidence="1">Divisome component that associates with the complex late in its assembly, after the Z-ring is formed, and is dependent on DivIC and PBP2B for its recruitment to the divisome. Together with EzrA, is a key component of the system that regulates PBP1 localization during cell cycle progression. Its main role could be the removal of PBP1 from the cell pole after pole maturation is completed. Also contributes to the recruitment of PBP1 to the division complex. Not essential for septum formation.</text>
</comment>
<comment type="subunit">
    <text evidence="1">Forms polymers through the coiled coil domains. Interacts with PBP1, MreC and EzrA.</text>
</comment>
<comment type="subcellular location">
    <subcellularLocation>
        <location evidence="1">Cytoplasm</location>
    </subcellularLocation>
    <text evidence="1">Shuttles between the lateral wall and the division site in a cell cycle-dependent manner.</text>
</comment>
<comment type="similarity">
    <text evidence="1">Belongs to the GpsB family.</text>
</comment>
<reference key="1">
    <citation type="journal article" date="2003" name="Nature">
        <title>The genome sequence of Bacillus anthracis Ames and comparison to closely related bacteria.</title>
        <authorList>
            <person name="Read T.D."/>
            <person name="Peterson S.N."/>
            <person name="Tourasse N.J."/>
            <person name="Baillie L.W."/>
            <person name="Paulsen I.T."/>
            <person name="Nelson K.E."/>
            <person name="Tettelin H."/>
            <person name="Fouts D.E."/>
            <person name="Eisen J.A."/>
            <person name="Gill S.R."/>
            <person name="Holtzapple E.K."/>
            <person name="Okstad O.A."/>
            <person name="Helgason E."/>
            <person name="Rilstone J."/>
            <person name="Wu M."/>
            <person name="Kolonay J.F."/>
            <person name="Beanan M.J."/>
            <person name="Dodson R.J."/>
            <person name="Brinkac L.M."/>
            <person name="Gwinn M.L."/>
            <person name="DeBoy R.T."/>
            <person name="Madpu R."/>
            <person name="Daugherty S.C."/>
            <person name="Durkin A.S."/>
            <person name="Haft D.H."/>
            <person name="Nelson W.C."/>
            <person name="Peterson J.D."/>
            <person name="Pop M."/>
            <person name="Khouri H.M."/>
            <person name="Radune D."/>
            <person name="Benton J.L."/>
            <person name="Mahamoud Y."/>
            <person name="Jiang L."/>
            <person name="Hance I.R."/>
            <person name="Weidman J.F."/>
            <person name="Berry K.J."/>
            <person name="Plaut R.D."/>
            <person name="Wolf A.M."/>
            <person name="Watkins K.L."/>
            <person name="Nierman W.C."/>
            <person name="Hazen A."/>
            <person name="Cline R.T."/>
            <person name="Redmond C."/>
            <person name="Thwaite J.E."/>
            <person name="White O."/>
            <person name="Salzberg S.L."/>
            <person name="Thomason B."/>
            <person name="Friedlander A.M."/>
            <person name="Koehler T.M."/>
            <person name="Hanna P.C."/>
            <person name="Kolstoe A.-B."/>
            <person name="Fraser C.M."/>
        </authorList>
    </citation>
    <scope>NUCLEOTIDE SEQUENCE [LARGE SCALE GENOMIC DNA]</scope>
    <source>
        <strain>Ames / isolate Porton</strain>
    </source>
</reference>
<reference key="2">
    <citation type="submission" date="2004-01" db="EMBL/GenBank/DDBJ databases">
        <title>Complete genome sequence of Bacillus anthracis Sterne.</title>
        <authorList>
            <person name="Brettin T.S."/>
            <person name="Bruce D."/>
            <person name="Challacombe J.F."/>
            <person name="Gilna P."/>
            <person name="Han C."/>
            <person name="Hill K."/>
            <person name="Hitchcock P."/>
            <person name="Jackson P."/>
            <person name="Keim P."/>
            <person name="Longmire J."/>
            <person name="Lucas S."/>
            <person name="Okinaka R."/>
            <person name="Richardson P."/>
            <person name="Rubin E."/>
            <person name="Tice H."/>
        </authorList>
    </citation>
    <scope>NUCLEOTIDE SEQUENCE [LARGE SCALE GENOMIC DNA]</scope>
    <source>
        <strain>Sterne</strain>
    </source>
</reference>
<reference key="3">
    <citation type="journal article" date="2009" name="J. Bacteriol.">
        <title>The complete genome sequence of Bacillus anthracis Ames 'Ancestor'.</title>
        <authorList>
            <person name="Ravel J."/>
            <person name="Jiang L."/>
            <person name="Stanley S.T."/>
            <person name="Wilson M.R."/>
            <person name="Decker R.S."/>
            <person name="Read T.D."/>
            <person name="Worsham P."/>
            <person name="Keim P.S."/>
            <person name="Salzberg S.L."/>
            <person name="Fraser-Liggett C.M."/>
            <person name="Rasko D.A."/>
        </authorList>
    </citation>
    <scope>NUCLEOTIDE SEQUENCE [LARGE SCALE GENOMIC DNA]</scope>
    <source>
        <strain>Ames ancestor</strain>
    </source>
</reference>
<dbReference type="EMBL" id="AE016879">
    <property type="protein sequence ID" value="AAP25518.1"/>
    <property type="molecule type" value="Genomic_DNA"/>
</dbReference>
<dbReference type="EMBL" id="AE017334">
    <property type="protein sequence ID" value="AAT30682.1"/>
    <property type="molecule type" value="Genomic_DNA"/>
</dbReference>
<dbReference type="EMBL" id="AE017225">
    <property type="protein sequence ID" value="AAT53787.1"/>
    <property type="molecule type" value="Genomic_DNA"/>
</dbReference>
<dbReference type="RefSeq" id="NP_844032.1">
    <property type="nucleotide sequence ID" value="NC_003997.3"/>
</dbReference>
<dbReference type="RefSeq" id="WP_000622430.1">
    <property type="nucleotide sequence ID" value="NZ_WXXJ01000001.1"/>
</dbReference>
<dbReference type="RefSeq" id="YP_027736.1">
    <property type="nucleotide sequence ID" value="NC_005945.1"/>
</dbReference>
<dbReference type="SMR" id="Q81SR3"/>
<dbReference type="STRING" id="261594.GBAA_1583"/>
<dbReference type="DNASU" id="1086465"/>
<dbReference type="GeneID" id="93009481"/>
<dbReference type="KEGG" id="ban:BA_1583"/>
<dbReference type="KEGG" id="banh:HYU01_08005"/>
<dbReference type="KEGG" id="bar:GBAA_1583"/>
<dbReference type="KEGG" id="bat:BAS1467"/>
<dbReference type="PATRIC" id="fig|198094.11.peg.1552"/>
<dbReference type="eggNOG" id="COG3599">
    <property type="taxonomic scope" value="Bacteria"/>
</dbReference>
<dbReference type="HOGENOM" id="CLU_140309_1_0_9"/>
<dbReference type="OMA" id="MEQVKYT"/>
<dbReference type="OrthoDB" id="389699at2"/>
<dbReference type="Proteomes" id="UP000000427">
    <property type="component" value="Chromosome"/>
</dbReference>
<dbReference type="Proteomes" id="UP000000594">
    <property type="component" value="Chromosome"/>
</dbReference>
<dbReference type="GO" id="GO:0005737">
    <property type="term" value="C:cytoplasm"/>
    <property type="evidence" value="ECO:0007669"/>
    <property type="project" value="UniProtKB-SubCell"/>
</dbReference>
<dbReference type="GO" id="GO:0051301">
    <property type="term" value="P:cell division"/>
    <property type="evidence" value="ECO:0007669"/>
    <property type="project" value="UniProtKB-UniRule"/>
</dbReference>
<dbReference type="GO" id="GO:0008360">
    <property type="term" value="P:regulation of cell shape"/>
    <property type="evidence" value="ECO:0007669"/>
    <property type="project" value="UniProtKB-UniRule"/>
</dbReference>
<dbReference type="Gene3D" id="6.10.250.660">
    <property type="match status" value="1"/>
</dbReference>
<dbReference type="HAMAP" id="MF_02011">
    <property type="entry name" value="GpsB"/>
    <property type="match status" value="1"/>
</dbReference>
<dbReference type="InterPro" id="IPR011229">
    <property type="entry name" value="Cell_cycle_GpsB"/>
</dbReference>
<dbReference type="InterPro" id="IPR019933">
    <property type="entry name" value="DivIVA_domain"/>
</dbReference>
<dbReference type="InterPro" id="IPR007793">
    <property type="entry name" value="DivIVA_fam"/>
</dbReference>
<dbReference type="NCBIfam" id="TIGR03544">
    <property type="entry name" value="DivI1A_domain"/>
    <property type="match status" value="1"/>
</dbReference>
<dbReference type="NCBIfam" id="NF010725">
    <property type="entry name" value="PRK14127.1"/>
    <property type="match status" value="1"/>
</dbReference>
<dbReference type="PANTHER" id="PTHR35794:SF1">
    <property type="entry name" value="CELL CYCLE PROTEIN GPSB"/>
    <property type="match status" value="1"/>
</dbReference>
<dbReference type="PANTHER" id="PTHR35794">
    <property type="entry name" value="CELL DIVISION PROTEIN DIVIVA"/>
    <property type="match status" value="1"/>
</dbReference>
<dbReference type="Pfam" id="PF05103">
    <property type="entry name" value="DivIVA"/>
    <property type="match status" value="1"/>
</dbReference>
<dbReference type="PIRSF" id="PIRSF029938">
    <property type="entry name" value="UCP029938"/>
    <property type="match status" value="1"/>
</dbReference>
<proteinExistence type="inferred from homology"/>
<evidence type="ECO:0000255" key="1">
    <source>
        <dbReference type="HAMAP-Rule" id="MF_02011"/>
    </source>
</evidence>
<protein>
    <recommendedName>
        <fullName evidence="1">Cell cycle protein GpsB</fullName>
    </recommendedName>
    <alternativeName>
        <fullName evidence="1">Guiding PBP1-shuttling protein</fullName>
    </alternativeName>
</protein>
<name>GPSB_BACAN</name>
<gene>
    <name evidence="1" type="primary">gpsB</name>
    <name type="ordered locus">BA_1583</name>
    <name type="ordered locus">GBAA_1583</name>
    <name type="ordered locus">BAS1467</name>
</gene>
<feature type="chain" id="PRO_0000337906" description="Cell cycle protein GpsB">
    <location>
        <begin position="1"/>
        <end position="112"/>
    </location>
</feature>
<feature type="coiled-coil region" evidence="1">
    <location>
        <begin position="38"/>
        <end position="72"/>
    </location>
</feature>
<keyword id="KW-0131">Cell cycle</keyword>
<keyword id="KW-0132">Cell division</keyword>
<keyword id="KW-0133">Cell shape</keyword>
<keyword id="KW-0175">Coiled coil</keyword>
<keyword id="KW-0963">Cytoplasm</keyword>
<keyword id="KW-1185">Reference proteome</keyword>
<accession>Q81SR3</accession>
<accession>Q6I0Z5</accession>
<accession>Q6KUU9</accession>
<sequence length="112" mass="13119">MISDKIKLTAKDILEKEFKTGMRGYQQEEVDKFLDMIIKDYEAFHKEFEQLKQQNARLKRELEEQKLAATQVPQQPVVQTPVAQPVYNNTNTDILKRLSNLEKAVFGSKLYE</sequence>